<dbReference type="EC" id="7.1.2.2" evidence="1"/>
<dbReference type="EMBL" id="CP001337">
    <property type="protein sequence ID" value="ACL23905.1"/>
    <property type="molecule type" value="Genomic_DNA"/>
</dbReference>
<dbReference type="RefSeq" id="WP_012616271.1">
    <property type="nucleotide sequence ID" value="NC_011831.1"/>
</dbReference>
<dbReference type="SMR" id="B8G6G8"/>
<dbReference type="STRING" id="326427.Cagg_0987"/>
<dbReference type="KEGG" id="cag:Cagg_0987"/>
<dbReference type="eggNOG" id="COG0056">
    <property type="taxonomic scope" value="Bacteria"/>
</dbReference>
<dbReference type="HOGENOM" id="CLU_010091_2_1_0"/>
<dbReference type="OrthoDB" id="9803053at2"/>
<dbReference type="Proteomes" id="UP000002508">
    <property type="component" value="Chromosome"/>
</dbReference>
<dbReference type="GO" id="GO:0005886">
    <property type="term" value="C:plasma membrane"/>
    <property type="evidence" value="ECO:0007669"/>
    <property type="project" value="UniProtKB-SubCell"/>
</dbReference>
<dbReference type="GO" id="GO:0045259">
    <property type="term" value="C:proton-transporting ATP synthase complex"/>
    <property type="evidence" value="ECO:0007669"/>
    <property type="project" value="UniProtKB-KW"/>
</dbReference>
<dbReference type="GO" id="GO:0043531">
    <property type="term" value="F:ADP binding"/>
    <property type="evidence" value="ECO:0007669"/>
    <property type="project" value="TreeGrafter"/>
</dbReference>
<dbReference type="GO" id="GO:0005524">
    <property type="term" value="F:ATP binding"/>
    <property type="evidence" value="ECO:0007669"/>
    <property type="project" value="UniProtKB-UniRule"/>
</dbReference>
<dbReference type="GO" id="GO:0046933">
    <property type="term" value="F:proton-transporting ATP synthase activity, rotational mechanism"/>
    <property type="evidence" value="ECO:0007669"/>
    <property type="project" value="UniProtKB-UniRule"/>
</dbReference>
<dbReference type="CDD" id="cd18113">
    <property type="entry name" value="ATP-synt_F1_alpha_C"/>
    <property type="match status" value="1"/>
</dbReference>
<dbReference type="CDD" id="cd18116">
    <property type="entry name" value="ATP-synt_F1_alpha_N"/>
    <property type="match status" value="1"/>
</dbReference>
<dbReference type="CDD" id="cd01132">
    <property type="entry name" value="F1-ATPase_alpha_CD"/>
    <property type="match status" value="1"/>
</dbReference>
<dbReference type="FunFam" id="1.20.150.20:FF:000001">
    <property type="entry name" value="ATP synthase subunit alpha"/>
    <property type="match status" value="1"/>
</dbReference>
<dbReference type="FunFam" id="3.40.50.300:FF:000002">
    <property type="entry name" value="ATP synthase subunit alpha"/>
    <property type="match status" value="1"/>
</dbReference>
<dbReference type="Gene3D" id="2.40.30.20">
    <property type="match status" value="1"/>
</dbReference>
<dbReference type="Gene3D" id="1.20.150.20">
    <property type="entry name" value="ATP synthase alpha/beta chain, C-terminal domain"/>
    <property type="match status" value="1"/>
</dbReference>
<dbReference type="Gene3D" id="3.40.50.300">
    <property type="entry name" value="P-loop containing nucleotide triphosphate hydrolases"/>
    <property type="match status" value="1"/>
</dbReference>
<dbReference type="HAMAP" id="MF_01346">
    <property type="entry name" value="ATP_synth_alpha_bact"/>
    <property type="match status" value="1"/>
</dbReference>
<dbReference type="InterPro" id="IPR023366">
    <property type="entry name" value="ATP_synth_asu-like_sf"/>
</dbReference>
<dbReference type="InterPro" id="IPR000793">
    <property type="entry name" value="ATP_synth_asu_C"/>
</dbReference>
<dbReference type="InterPro" id="IPR038376">
    <property type="entry name" value="ATP_synth_asu_C_sf"/>
</dbReference>
<dbReference type="InterPro" id="IPR033732">
    <property type="entry name" value="ATP_synth_F1_a_nt-bd_dom"/>
</dbReference>
<dbReference type="InterPro" id="IPR005294">
    <property type="entry name" value="ATP_synth_F1_asu"/>
</dbReference>
<dbReference type="InterPro" id="IPR020003">
    <property type="entry name" value="ATPase_a/bsu_AS"/>
</dbReference>
<dbReference type="InterPro" id="IPR004100">
    <property type="entry name" value="ATPase_F1/V1/A1_a/bsu_N"/>
</dbReference>
<dbReference type="InterPro" id="IPR036121">
    <property type="entry name" value="ATPase_F1/V1/A1_a/bsu_N_sf"/>
</dbReference>
<dbReference type="InterPro" id="IPR000194">
    <property type="entry name" value="ATPase_F1/V1/A1_a/bsu_nucl-bd"/>
</dbReference>
<dbReference type="InterPro" id="IPR027417">
    <property type="entry name" value="P-loop_NTPase"/>
</dbReference>
<dbReference type="NCBIfam" id="TIGR00962">
    <property type="entry name" value="atpA"/>
    <property type="match status" value="1"/>
</dbReference>
<dbReference type="NCBIfam" id="NF009884">
    <property type="entry name" value="PRK13343.1"/>
    <property type="match status" value="1"/>
</dbReference>
<dbReference type="PANTHER" id="PTHR48082">
    <property type="entry name" value="ATP SYNTHASE SUBUNIT ALPHA, MITOCHONDRIAL"/>
    <property type="match status" value="1"/>
</dbReference>
<dbReference type="PANTHER" id="PTHR48082:SF2">
    <property type="entry name" value="ATP SYNTHASE SUBUNIT ALPHA, MITOCHONDRIAL"/>
    <property type="match status" value="1"/>
</dbReference>
<dbReference type="Pfam" id="PF00006">
    <property type="entry name" value="ATP-synt_ab"/>
    <property type="match status" value="1"/>
</dbReference>
<dbReference type="Pfam" id="PF00306">
    <property type="entry name" value="ATP-synt_ab_C"/>
    <property type="match status" value="1"/>
</dbReference>
<dbReference type="Pfam" id="PF02874">
    <property type="entry name" value="ATP-synt_ab_N"/>
    <property type="match status" value="1"/>
</dbReference>
<dbReference type="SUPFAM" id="SSF47917">
    <property type="entry name" value="C-terminal domain of alpha and beta subunits of F1 ATP synthase"/>
    <property type="match status" value="1"/>
</dbReference>
<dbReference type="SUPFAM" id="SSF50615">
    <property type="entry name" value="N-terminal domain of alpha and beta subunits of F1 ATP synthase"/>
    <property type="match status" value="1"/>
</dbReference>
<dbReference type="SUPFAM" id="SSF52540">
    <property type="entry name" value="P-loop containing nucleoside triphosphate hydrolases"/>
    <property type="match status" value="1"/>
</dbReference>
<dbReference type="PROSITE" id="PS00152">
    <property type="entry name" value="ATPASE_ALPHA_BETA"/>
    <property type="match status" value="1"/>
</dbReference>
<sequence length="522" mass="56499">MTTITEELIARLKQGIISGVDLQPRQVNVGTVIAVGDGVARLSGLDQVVASEIVEFPPKAGRNESIYGIALNLEQDSVAAIILGDDESIEEGDLVTSTGRVISVPVGQGLLGRVVNPLGQPIDGKGPIQYEKMRPIERIAPGVITRKSVDTPVQTGIIAIDALIPIGRGQRELIIGDRQTGKTAVAIDTIINQKGQGMVCIYVAIGQRRAQVAQVVGTLEKYGAMEYTIVVSATASESAALQYIAPYAGCAMGEEIMENGVMLNGQLVKDALIVYDDLSKHAVAYRQVSLLLRRPPGREAYPGDVFYLHSRLLERAARLNEEYGGGSLTALPVIETQANDVSAYIPTNVISITDGQIYLEADLFNAGQRPALNVGISVSRVGSAAQTRAMRAVAGKLKGELAQFRDLAAFAQFASDLDATTKAQIERGQRLQELLKQPQFQPLAVEDQVAVLYAATNNYLDDVPVAMITKWRDDFLAFLRTAHPEVRKLIYDNRLDRKFPTPEVKEALEAAIKEFKATSNYS</sequence>
<feature type="chain" id="PRO_1000166529" description="ATP synthase subunit alpha">
    <location>
        <begin position="1"/>
        <end position="522"/>
    </location>
</feature>
<feature type="binding site" evidence="1">
    <location>
        <begin position="176"/>
        <end position="183"/>
    </location>
    <ligand>
        <name>ATP</name>
        <dbReference type="ChEBI" id="CHEBI:30616"/>
    </ligand>
</feature>
<feature type="site" description="Required for activity" evidence="1">
    <location>
        <position position="377"/>
    </location>
</feature>
<gene>
    <name evidence="1" type="primary">atpA</name>
    <name type="ordered locus">Cagg_0987</name>
</gene>
<protein>
    <recommendedName>
        <fullName evidence="1">ATP synthase subunit alpha</fullName>
        <ecNumber evidence="1">7.1.2.2</ecNumber>
    </recommendedName>
    <alternativeName>
        <fullName evidence="1">ATP synthase F1 sector subunit alpha</fullName>
    </alternativeName>
    <alternativeName>
        <fullName evidence="1">F-ATPase subunit alpha</fullName>
    </alternativeName>
</protein>
<comment type="function">
    <text evidence="1">Produces ATP from ADP in the presence of a proton gradient across the membrane. The alpha chain is a regulatory subunit.</text>
</comment>
<comment type="catalytic activity">
    <reaction evidence="1">
        <text>ATP + H2O + 4 H(+)(in) = ADP + phosphate + 5 H(+)(out)</text>
        <dbReference type="Rhea" id="RHEA:57720"/>
        <dbReference type="ChEBI" id="CHEBI:15377"/>
        <dbReference type="ChEBI" id="CHEBI:15378"/>
        <dbReference type="ChEBI" id="CHEBI:30616"/>
        <dbReference type="ChEBI" id="CHEBI:43474"/>
        <dbReference type="ChEBI" id="CHEBI:456216"/>
        <dbReference type="EC" id="7.1.2.2"/>
    </reaction>
</comment>
<comment type="subunit">
    <text evidence="1">F-type ATPases have 2 components, CF(1) - the catalytic core - and CF(0) - the membrane proton channel. CF(1) has five subunits: alpha(3), beta(3), gamma(1), delta(1), epsilon(1). CF(0) has four main subunits: a, b, b' and c.</text>
</comment>
<comment type="subcellular location">
    <subcellularLocation>
        <location evidence="1">Cell membrane</location>
        <topology evidence="1">Peripheral membrane protein</topology>
    </subcellularLocation>
</comment>
<comment type="similarity">
    <text evidence="1">Belongs to the ATPase alpha/beta chains family.</text>
</comment>
<name>ATPA_CHLAD</name>
<reference key="1">
    <citation type="submission" date="2008-12" db="EMBL/GenBank/DDBJ databases">
        <title>Complete sequence of Chloroflexus aggregans DSM 9485.</title>
        <authorList>
            <consortium name="US DOE Joint Genome Institute"/>
            <person name="Lucas S."/>
            <person name="Copeland A."/>
            <person name="Lapidus A."/>
            <person name="Glavina del Rio T."/>
            <person name="Dalin E."/>
            <person name="Tice H."/>
            <person name="Pitluck S."/>
            <person name="Foster B."/>
            <person name="Larimer F."/>
            <person name="Land M."/>
            <person name="Hauser L."/>
            <person name="Kyrpides N."/>
            <person name="Mikhailova N."/>
            <person name="Bryant D.A."/>
            <person name="Richardson P."/>
        </authorList>
    </citation>
    <scope>NUCLEOTIDE SEQUENCE [LARGE SCALE GENOMIC DNA]</scope>
    <source>
        <strain>MD-66 / DSM 9485</strain>
    </source>
</reference>
<accession>B8G6G8</accession>
<keyword id="KW-0066">ATP synthesis</keyword>
<keyword id="KW-0067">ATP-binding</keyword>
<keyword id="KW-1003">Cell membrane</keyword>
<keyword id="KW-0139">CF(1)</keyword>
<keyword id="KW-0375">Hydrogen ion transport</keyword>
<keyword id="KW-0406">Ion transport</keyword>
<keyword id="KW-0472">Membrane</keyword>
<keyword id="KW-0547">Nucleotide-binding</keyword>
<keyword id="KW-1278">Translocase</keyword>
<keyword id="KW-0813">Transport</keyword>
<proteinExistence type="inferred from homology"/>
<organism>
    <name type="scientific">Chloroflexus aggregans (strain MD-66 / DSM 9485)</name>
    <dbReference type="NCBI Taxonomy" id="326427"/>
    <lineage>
        <taxon>Bacteria</taxon>
        <taxon>Bacillati</taxon>
        <taxon>Chloroflexota</taxon>
        <taxon>Chloroflexia</taxon>
        <taxon>Chloroflexales</taxon>
        <taxon>Chloroflexineae</taxon>
        <taxon>Chloroflexaceae</taxon>
        <taxon>Chloroflexus</taxon>
    </lineage>
</organism>
<evidence type="ECO:0000255" key="1">
    <source>
        <dbReference type="HAMAP-Rule" id="MF_01346"/>
    </source>
</evidence>